<gene>
    <name evidence="1" type="primary">fusA</name>
    <name type="ordered locus">BMEA_A1281</name>
</gene>
<feature type="chain" id="PRO_1000201442" description="Elongation factor G">
    <location>
        <begin position="1"/>
        <end position="694"/>
    </location>
</feature>
<feature type="domain" description="tr-type G">
    <location>
        <begin position="8"/>
        <end position="287"/>
    </location>
</feature>
<feature type="binding site" evidence="1">
    <location>
        <begin position="17"/>
        <end position="24"/>
    </location>
    <ligand>
        <name>GTP</name>
        <dbReference type="ChEBI" id="CHEBI:37565"/>
    </ligand>
</feature>
<feature type="binding site" evidence="1">
    <location>
        <begin position="86"/>
        <end position="90"/>
    </location>
    <ligand>
        <name>GTP</name>
        <dbReference type="ChEBI" id="CHEBI:37565"/>
    </ligand>
</feature>
<feature type="binding site" evidence="1">
    <location>
        <begin position="140"/>
        <end position="143"/>
    </location>
    <ligand>
        <name>GTP</name>
        <dbReference type="ChEBI" id="CHEBI:37565"/>
    </ligand>
</feature>
<reference key="1">
    <citation type="submission" date="2009-03" db="EMBL/GenBank/DDBJ databases">
        <title>Brucella melitensis ATCC 23457 whole genome shotgun sequencing project.</title>
        <authorList>
            <person name="Setubal J.C."/>
            <person name="Boyle S."/>
            <person name="Crasta O.R."/>
            <person name="Gillespie J.J."/>
            <person name="Kenyon R.W."/>
            <person name="Lu J."/>
            <person name="Mane S."/>
            <person name="Nagrani S."/>
            <person name="Shallom J.M."/>
            <person name="Shallom S."/>
            <person name="Shukla M."/>
            <person name="Snyder E.E."/>
            <person name="Sobral B.W."/>
            <person name="Wattam A.R."/>
            <person name="Will R."/>
            <person name="Williams K."/>
            <person name="Yoo H."/>
            <person name="Munk C."/>
            <person name="Tapia R."/>
            <person name="Han C."/>
            <person name="Detter J.C."/>
            <person name="Bruce D."/>
            <person name="Brettin T.S."/>
        </authorList>
    </citation>
    <scope>NUCLEOTIDE SEQUENCE [LARGE SCALE GENOMIC DNA]</scope>
    <source>
        <strain>ATCC 23457</strain>
    </source>
</reference>
<accession>C0RJK4</accession>
<keyword id="KW-0963">Cytoplasm</keyword>
<keyword id="KW-0251">Elongation factor</keyword>
<keyword id="KW-0342">GTP-binding</keyword>
<keyword id="KW-0547">Nucleotide-binding</keyword>
<keyword id="KW-0648">Protein biosynthesis</keyword>
<organism>
    <name type="scientific">Brucella melitensis biotype 2 (strain ATCC 23457)</name>
    <dbReference type="NCBI Taxonomy" id="546272"/>
    <lineage>
        <taxon>Bacteria</taxon>
        <taxon>Pseudomonadati</taxon>
        <taxon>Pseudomonadota</taxon>
        <taxon>Alphaproteobacteria</taxon>
        <taxon>Hyphomicrobiales</taxon>
        <taxon>Brucellaceae</taxon>
        <taxon>Brucella/Ochrobactrum group</taxon>
        <taxon>Brucella</taxon>
    </lineage>
</organism>
<evidence type="ECO:0000255" key="1">
    <source>
        <dbReference type="HAMAP-Rule" id="MF_00054"/>
    </source>
</evidence>
<name>EFG_BRUMB</name>
<protein>
    <recommendedName>
        <fullName evidence="1">Elongation factor G</fullName>
        <shortName evidence="1">EF-G</shortName>
    </recommendedName>
</protein>
<comment type="function">
    <text evidence="1">Catalyzes the GTP-dependent ribosomal translocation step during translation elongation. During this step, the ribosome changes from the pre-translocational (PRE) to the post-translocational (POST) state as the newly formed A-site-bound peptidyl-tRNA and P-site-bound deacylated tRNA move to the P and E sites, respectively. Catalyzes the coordinated movement of the two tRNA molecules, the mRNA and conformational changes in the ribosome.</text>
</comment>
<comment type="subcellular location">
    <subcellularLocation>
        <location evidence="1">Cytoplasm</location>
    </subcellularLocation>
</comment>
<comment type="similarity">
    <text evidence="1">Belongs to the TRAFAC class translation factor GTPase superfamily. Classic translation factor GTPase family. EF-G/EF-2 subfamily.</text>
</comment>
<sequence>MAREYKIEDYRNFGIMAHIDAGKTTMTERILFYTGKNHKIGETHDGASTMDWMEQEQERGITITSAATTTFWQGRDGKKRRFNIIDTPGHVDFTIEVERSLRVLDGAIALLDANAGVEPQTETVWRQAEKYHVPRMVFVNKMDKIGADFYRSVEMVGSRLGAVALPVQLPIGAENDFVGVVDLIEMKALTWDGTIGAPATVGEIPADMADKAEEYREKLIELAVEIDEAAMEAYLEGTMPTNDELRALIRKGTIEVKFHPILCGTAFKNRGVQPLLDAVVEFLPAPTDVPAIKGIDVKTETETTRESSDEAPLSMLAFKIMNDPFVGSLTFARIYSGKLTKGVSLENTVKGKRERIGRMLQMHSNSREDIDEAFAGDIVALAGLKETTTGDTLCDPLKPVILERMEFPDPVIEIAIEPKTKADQEKMGIALNRLAAEDPSFRVKSDEESGQTIIAGMGELHLDILVDRMKREFKVEANVGAPQVAYRESITRAAEIDYTHKKQSGGSGQFARVKIIFEPHDGDDFIFESKIVGGSVPKEYIPGVQKGIESVMGAGPLAGFPMLGVKATLIDGTYHDVDSSVLAFEIASRAAFREGAQKAGAQLLEPIMKVEVVTPEDYVGDVIGDLNSRRGQISGTEARGIATVVNAMVPLANMFGYVNSLRSMSQGRAQYTMQFDHYEPVPTAVAQEIQKKFA</sequence>
<dbReference type="EMBL" id="CP001488">
    <property type="protein sequence ID" value="ACO01012.1"/>
    <property type="molecule type" value="Genomic_DNA"/>
</dbReference>
<dbReference type="RefSeq" id="WP_004686419.1">
    <property type="nucleotide sequence ID" value="NC_012441.1"/>
</dbReference>
<dbReference type="SMR" id="C0RJK4"/>
<dbReference type="KEGG" id="bmi:BMEA_A1281"/>
<dbReference type="HOGENOM" id="CLU_002794_4_1_5"/>
<dbReference type="Proteomes" id="UP000001748">
    <property type="component" value="Chromosome I"/>
</dbReference>
<dbReference type="GO" id="GO:0005737">
    <property type="term" value="C:cytoplasm"/>
    <property type="evidence" value="ECO:0007669"/>
    <property type="project" value="UniProtKB-SubCell"/>
</dbReference>
<dbReference type="GO" id="GO:0005525">
    <property type="term" value="F:GTP binding"/>
    <property type="evidence" value="ECO:0007669"/>
    <property type="project" value="UniProtKB-UniRule"/>
</dbReference>
<dbReference type="GO" id="GO:0003924">
    <property type="term" value="F:GTPase activity"/>
    <property type="evidence" value="ECO:0007669"/>
    <property type="project" value="InterPro"/>
</dbReference>
<dbReference type="GO" id="GO:0097216">
    <property type="term" value="F:guanosine tetraphosphate binding"/>
    <property type="evidence" value="ECO:0007669"/>
    <property type="project" value="UniProtKB-ARBA"/>
</dbReference>
<dbReference type="GO" id="GO:0003746">
    <property type="term" value="F:translation elongation factor activity"/>
    <property type="evidence" value="ECO:0007669"/>
    <property type="project" value="UniProtKB-UniRule"/>
</dbReference>
<dbReference type="GO" id="GO:0032790">
    <property type="term" value="P:ribosome disassembly"/>
    <property type="evidence" value="ECO:0007669"/>
    <property type="project" value="TreeGrafter"/>
</dbReference>
<dbReference type="CDD" id="cd01886">
    <property type="entry name" value="EF-G"/>
    <property type="match status" value="1"/>
</dbReference>
<dbReference type="CDD" id="cd16262">
    <property type="entry name" value="EFG_III"/>
    <property type="match status" value="1"/>
</dbReference>
<dbReference type="CDD" id="cd01434">
    <property type="entry name" value="EFG_mtEFG1_IV"/>
    <property type="match status" value="1"/>
</dbReference>
<dbReference type="CDD" id="cd03713">
    <property type="entry name" value="EFG_mtEFG_C"/>
    <property type="match status" value="1"/>
</dbReference>
<dbReference type="CDD" id="cd04088">
    <property type="entry name" value="EFG_mtEFG_II"/>
    <property type="match status" value="1"/>
</dbReference>
<dbReference type="FunFam" id="2.40.30.10:FF:000006">
    <property type="entry name" value="Elongation factor G"/>
    <property type="match status" value="1"/>
</dbReference>
<dbReference type="FunFam" id="3.30.230.10:FF:000003">
    <property type="entry name" value="Elongation factor G"/>
    <property type="match status" value="1"/>
</dbReference>
<dbReference type="FunFam" id="3.30.70.240:FF:000001">
    <property type="entry name" value="Elongation factor G"/>
    <property type="match status" value="1"/>
</dbReference>
<dbReference type="FunFam" id="3.30.70.870:FF:000001">
    <property type="entry name" value="Elongation factor G"/>
    <property type="match status" value="1"/>
</dbReference>
<dbReference type="FunFam" id="3.40.50.300:FF:000029">
    <property type="entry name" value="Elongation factor G"/>
    <property type="match status" value="1"/>
</dbReference>
<dbReference type="Gene3D" id="3.30.230.10">
    <property type="match status" value="1"/>
</dbReference>
<dbReference type="Gene3D" id="3.30.70.240">
    <property type="match status" value="1"/>
</dbReference>
<dbReference type="Gene3D" id="3.30.70.870">
    <property type="entry name" value="Elongation Factor G (Translational Gtpase), domain 3"/>
    <property type="match status" value="1"/>
</dbReference>
<dbReference type="Gene3D" id="3.40.50.300">
    <property type="entry name" value="P-loop containing nucleotide triphosphate hydrolases"/>
    <property type="match status" value="1"/>
</dbReference>
<dbReference type="Gene3D" id="2.40.30.10">
    <property type="entry name" value="Translation factors"/>
    <property type="match status" value="1"/>
</dbReference>
<dbReference type="HAMAP" id="MF_00054_B">
    <property type="entry name" value="EF_G_EF_2_B"/>
    <property type="match status" value="1"/>
</dbReference>
<dbReference type="InterPro" id="IPR041095">
    <property type="entry name" value="EFG_II"/>
</dbReference>
<dbReference type="InterPro" id="IPR009022">
    <property type="entry name" value="EFG_III"/>
</dbReference>
<dbReference type="InterPro" id="IPR035647">
    <property type="entry name" value="EFG_III/V"/>
</dbReference>
<dbReference type="InterPro" id="IPR047872">
    <property type="entry name" value="EFG_IV"/>
</dbReference>
<dbReference type="InterPro" id="IPR035649">
    <property type="entry name" value="EFG_V"/>
</dbReference>
<dbReference type="InterPro" id="IPR000640">
    <property type="entry name" value="EFG_V-like"/>
</dbReference>
<dbReference type="InterPro" id="IPR004161">
    <property type="entry name" value="EFTu-like_2"/>
</dbReference>
<dbReference type="InterPro" id="IPR031157">
    <property type="entry name" value="G_TR_CS"/>
</dbReference>
<dbReference type="InterPro" id="IPR027417">
    <property type="entry name" value="P-loop_NTPase"/>
</dbReference>
<dbReference type="InterPro" id="IPR020568">
    <property type="entry name" value="Ribosomal_Su5_D2-typ_SF"/>
</dbReference>
<dbReference type="InterPro" id="IPR014721">
    <property type="entry name" value="Ribsml_uS5_D2-typ_fold_subgr"/>
</dbReference>
<dbReference type="InterPro" id="IPR005225">
    <property type="entry name" value="Small_GTP-bd"/>
</dbReference>
<dbReference type="InterPro" id="IPR000795">
    <property type="entry name" value="T_Tr_GTP-bd_dom"/>
</dbReference>
<dbReference type="InterPro" id="IPR009000">
    <property type="entry name" value="Transl_B-barrel_sf"/>
</dbReference>
<dbReference type="InterPro" id="IPR004540">
    <property type="entry name" value="Transl_elong_EFG/EF2"/>
</dbReference>
<dbReference type="InterPro" id="IPR005517">
    <property type="entry name" value="Transl_elong_EFG/EF2_IV"/>
</dbReference>
<dbReference type="NCBIfam" id="TIGR00484">
    <property type="entry name" value="EF-G"/>
    <property type="match status" value="1"/>
</dbReference>
<dbReference type="NCBIfam" id="NF009381">
    <property type="entry name" value="PRK12740.1-5"/>
    <property type="match status" value="1"/>
</dbReference>
<dbReference type="NCBIfam" id="TIGR00231">
    <property type="entry name" value="small_GTP"/>
    <property type="match status" value="1"/>
</dbReference>
<dbReference type="PANTHER" id="PTHR43261:SF1">
    <property type="entry name" value="RIBOSOME-RELEASING FACTOR 2, MITOCHONDRIAL"/>
    <property type="match status" value="1"/>
</dbReference>
<dbReference type="PANTHER" id="PTHR43261">
    <property type="entry name" value="TRANSLATION ELONGATION FACTOR G-RELATED"/>
    <property type="match status" value="1"/>
</dbReference>
<dbReference type="Pfam" id="PF00679">
    <property type="entry name" value="EFG_C"/>
    <property type="match status" value="1"/>
</dbReference>
<dbReference type="Pfam" id="PF14492">
    <property type="entry name" value="EFG_III"/>
    <property type="match status" value="1"/>
</dbReference>
<dbReference type="Pfam" id="PF03764">
    <property type="entry name" value="EFG_IV"/>
    <property type="match status" value="1"/>
</dbReference>
<dbReference type="Pfam" id="PF00009">
    <property type="entry name" value="GTP_EFTU"/>
    <property type="match status" value="1"/>
</dbReference>
<dbReference type="Pfam" id="PF03144">
    <property type="entry name" value="GTP_EFTU_D2"/>
    <property type="match status" value="1"/>
</dbReference>
<dbReference type="PRINTS" id="PR00315">
    <property type="entry name" value="ELONGATNFCT"/>
</dbReference>
<dbReference type="SMART" id="SM00838">
    <property type="entry name" value="EFG_C"/>
    <property type="match status" value="1"/>
</dbReference>
<dbReference type="SMART" id="SM00889">
    <property type="entry name" value="EFG_IV"/>
    <property type="match status" value="1"/>
</dbReference>
<dbReference type="SUPFAM" id="SSF54980">
    <property type="entry name" value="EF-G C-terminal domain-like"/>
    <property type="match status" value="2"/>
</dbReference>
<dbReference type="SUPFAM" id="SSF52540">
    <property type="entry name" value="P-loop containing nucleoside triphosphate hydrolases"/>
    <property type="match status" value="1"/>
</dbReference>
<dbReference type="SUPFAM" id="SSF54211">
    <property type="entry name" value="Ribosomal protein S5 domain 2-like"/>
    <property type="match status" value="1"/>
</dbReference>
<dbReference type="SUPFAM" id="SSF50447">
    <property type="entry name" value="Translation proteins"/>
    <property type="match status" value="1"/>
</dbReference>
<dbReference type="PROSITE" id="PS00301">
    <property type="entry name" value="G_TR_1"/>
    <property type="match status" value="1"/>
</dbReference>
<dbReference type="PROSITE" id="PS51722">
    <property type="entry name" value="G_TR_2"/>
    <property type="match status" value="1"/>
</dbReference>
<proteinExistence type="inferred from homology"/>